<comment type="function">
    <text evidence="1">Catalyzes the condensation of the acetyl group of acetyl-CoA with 3-methyl-2-oxobutanoate (2-ketoisovalerate) to form 3-carboxy-3-hydroxy-4-methylpentanoate (2-isopropylmalate).</text>
</comment>
<comment type="catalytic activity">
    <reaction evidence="1">
        <text>3-methyl-2-oxobutanoate + acetyl-CoA + H2O = (2S)-2-isopropylmalate + CoA + H(+)</text>
        <dbReference type="Rhea" id="RHEA:21524"/>
        <dbReference type="ChEBI" id="CHEBI:1178"/>
        <dbReference type="ChEBI" id="CHEBI:11851"/>
        <dbReference type="ChEBI" id="CHEBI:15377"/>
        <dbReference type="ChEBI" id="CHEBI:15378"/>
        <dbReference type="ChEBI" id="CHEBI:57287"/>
        <dbReference type="ChEBI" id="CHEBI:57288"/>
        <dbReference type="EC" id="2.3.3.13"/>
    </reaction>
</comment>
<comment type="cofactor">
    <cofactor evidence="1">
        <name>Mn(2+)</name>
        <dbReference type="ChEBI" id="CHEBI:29035"/>
    </cofactor>
</comment>
<comment type="pathway">
    <text evidence="1">Amino-acid biosynthesis; L-leucine biosynthesis; L-leucine from 3-methyl-2-oxobutanoate: step 1/4.</text>
</comment>
<comment type="subunit">
    <text evidence="1">Homodimer.</text>
</comment>
<comment type="subcellular location">
    <subcellularLocation>
        <location evidence="1">Cytoplasm</location>
    </subcellularLocation>
</comment>
<comment type="similarity">
    <text evidence="1">Belongs to the alpha-IPM synthase/homocitrate synthase family. LeuA type 1 subfamily.</text>
</comment>
<reference key="1">
    <citation type="journal article" date="2004" name="Nat. Biotechnol.">
        <title>Complete genome sequence of the metabolically versatile photosynthetic bacterium Rhodopseudomonas palustris.</title>
        <authorList>
            <person name="Larimer F.W."/>
            <person name="Chain P."/>
            <person name="Hauser L."/>
            <person name="Lamerdin J.E."/>
            <person name="Malfatti S."/>
            <person name="Do L."/>
            <person name="Land M.L."/>
            <person name="Pelletier D.A."/>
            <person name="Beatty J.T."/>
            <person name="Lang A.S."/>
            <person name="Tabita F.R."/>
            <person name="Gibson J.L."/>
            <person name="Hanson T.E."/>
            <person name="Bobst C."/>
            <person name="Torres y Torres J.L."/>
            <person name="Peres C."/>
            <person name="Harrison F.H."/>
            <person name="Gibson J."/>
            <person name="Harwood C.S."/>
        </authorList>
    </citation>
    <scope>NUCLEOTIDE SEQUENCE [LARGE SCALE GENOMIC DNA]</scope>
    <source>
        <strain>ATCC BAA-98 / CGA009</strain>
    </source>
</reference>
<proteinExistence type="inferred from homology"/>
<sequence>MTTTTQSEQDRVIIFDTTLRDGEQCPGATMTFEEKLNVARMLDDMGVDVIEAGYPFASDGDFEAVHEIAKRSKNSVICGLSRAAHKDIDRCAEAIKPAERGRIHTFLSTSPVHMKYKLQMEAAQVYEMVISSVTRARNHTDDVEWSAEDATRTEFDFLCRCIEAAIKAGATTINLPDTVGYAVPEEYRELFRKVRETVPNSDKARFSVHCHNDLGMAVANSMAGVAGGARQIECTINGIGERAGNAALEEVVMAMRVRQDRLPYWNRIETTMLTHASKTVSAATSFPVQYNKAIVGRNAFAHESGIHQDGMIKNAQTYEIMTPETVGVKGTSLVMGKHSGRAGLIHKMEELGYKLSRNQIEDVFVRFKALADRKKDVYDEDIEALVDEQLLHGQDQIKLMSLTVIAGTHGPQRATMKLDVDGQIRIEEAEGNGPVDAVFNCIKALVPHDAKLELYQVHAVTEGTDAQAEVSVRLSHEGRSMTARAADPDTLVASAKAYLGALNKIVAKRQRSVREDAPAVAVAG</sequence>
<protein>
    <recommendedName>
        <fullName evidence="1">2-isopropylmalate synthase</fullName>
        <ecNumber evidence="1">2.3.3.13</ecNumber>
    </recommendedName>
    <alternativeName>
        <fullName evidence="1">Alpha-IPM synthase</fullName>
    </alternativeName>
    <alternativeName>
        <fullName evidence="1">Alpha-isopropylmalate synthase</fullName>
    </alternativeName>
</protein>
<gene>
    <name evidence="1" type="primary">leuA</name>
    <name type="ordered locus">RPA2046</name>
</gene>
<keyword id="KW-0028">Amino-acid biosynthesis</keyword>
<keyword id="KW-0100">Branched-chain amino acid biosynthesis</keyword>
<keyword id="KW-0963">Cytoplasm</keyword>
<keyword id="KW-0432">Leucine biosynthesis</keyword>
<keyword id="KW-0464">Manganese</keyword>
<keyword id="KW-0479">Metal-binding</keyword>
<keyword id="KW-0808">Transferase</keyword>
<organism>
    <name type="scientific">Rhodopseudomonas palustris (strain ATCC BAA-98 / CGA009)</name>
    <dbReference type="NCBI Taxonomy" id="258594"/>
    <lineage>
        <taxon>Bacteria</taxon>
        <taxon>Pseudomonadati</taxon>
        <taxon>Pseudomonadota</taxon>
        <taxon>Alphaproteobacteria</taxon>
        <taxon>Hyphomicrobiales</taxon>
        <taxon>Nitrobacteraceae</taxon>
        <taxon>Rhodopseudomonas</taxon>
    </lineage>
</organism>
<accession>Q6N858</accession>
<feature type="chain" id="PRO_1000149258" description="2-isopropylmalate synthase">
    <location>
        <begin position="1"/>
        <end position="524"/>
    </location>
</feature>
<feature type="domain" description="Pyruvate carboxyltransferase" evidence="1">
    <location>
        <begin position="12"/>
        <end position="274"/>
    </location>
</feature>
<feature type="region of interest" description="Regulatory domain" evidence="1">
    <location>
        <begin position="398"/>
        <end position="524"/>
    </location>
</feature>
<feature type="binding site" evidence="1">
    <location>
        <position position="21"/>
    </location>
    <ligand>
        <name>Mn(2+)</name>
        <dbReference type="ChEBI" id="CHEBI:29035"/>
    </ligand>
</feature>
<feature type="binding site" evidence="1">
    <location>
        <position position="209"/>
    </location>
    <ligand>
        <name>Mn(2+)</name>
        <dbReference type="ChEBI" id="CHEBI:29035"/>
    </ligand>
</feature>
<feature type="binding site" evidence="1">
    <location>
        <position position="211"/>
    </location>
    <ligand>
        <name>Mn(2+)</name>
        <dbReference type="ChEBI" id="CHEBI:29035"/>
    </ligand>
</feature>
<feature type="binding site" evidence="1">
    <location>
        <position position="245"/>
    </location>
    <ligand>
        <name>Mn(2+)</name>
        <dbReference type="ChEBI" id="CHEBI:29035"/>
    </ligand>
</feature>
<name>LEU1_RHOPA</name>
<evidence type="ECO:0000255" key="1">
    <source>
        <dbReference type="HAMAP-Rule" id="MF_01025"/>
    </source>
</evidence>
<dbReference type="EC" id="2.3.3.13" evidence="1"/>
<dbReference type="EMBL" id="BX572599">
    <property type="protein sequence ID" value="CAE27487.1"/>
    <property type="molecule type" value="Genomic_DNA"/>
</dbReference>
<dbReference type="RefSeq" id="WP_011157601.1">
    <property type="nucleotide sequence ID" value="NZ_CP116810.1"/>
</dbReference>
<dbReference type="SMR" id="Q6N858"/>
<dbReference type="STRING" id="258594.RPA2046"/>
<dbReference type="GeneID" id="66893091"/>
<dbReference type="eggNOG" id="COG0119">
    <property type="taxonomic scope" value="Bacteria"/>
</dbReference>
<dbReference type="HOGENOM" id="CLU_022158_0_1_5"/>
<dbReference type="PhylomeDB" id="Q6N858"/>
<dbReference type="UniPathway" id="UPA00048">
    <property type="reaction ID" value="UER00070"/>
</dbReference>
<dbReference type="GO" id="GO:0005829">
    <property type="term" value="C:cytosol"/>
    <property type="evidence" value="ECO:0007669"/>
    <property type="project" value="TreeGrafter"/>
</dbReference>
<dbReference type="GO" id="GO:0003852">
    <property type="term" value="F:2-isopropylmalate synthase activity"/>
    <property type="evidence" value="ECO:0007669"/>
    <property type="project" value="UniProtKB-UniRule"/>
</dbReference>
<dbReference type="GO" id="GO:0003985">
    <property type="term" value="F:acetyl-CoA C-acetyltransferase activity"/>
    <property type="evidence" value="ECO:0007669"/>
    <property type="project" value="UniProtKB-UniRule"/>
</dbReference>
<dbReference type="GO" id="GO:0030145">
    <property type="term" value="F:manganese ion binding"/>
    <property type="evidence" value="ECO:0007669"/>
    <property type="project" value="UniProtKB-UniRule"/>
</dbReference>
<dbReference type="GO" id="GO:0009098">
    <property type="term" value="P:L-leucine biosynthetic process"/>
    <property type="evidence" value="ECO:0007669"/>
    <property type="project" value="UniProtKB-UniRule"/>
</dbReference>
<dbReference type="CDD" id="cd07940">
    <property type="entry name" value="DRE_TIM_IPMS"/>
    <property type="match status" value="1"/>
</dbReference>
<dbReference type="FunFam" id="1.10.238.260:FF:000001">
    <property type="entry name" value="2-isopropylmalate synthase"/>
    <property type="match status" value="1"/>
</dbReference>
<dbReference type="FunFam" id="3.20.20.70:FF:000010">
    <property type="entry name" value="2-isopropylmalate synthase"/>
    <property type="match status" value="1"/>
</dbReference>
<dbReference type="FunFam" id="3.30.160.270:FF:000003">
    <property type="entry name" value="2-isopropylmalate synthase"/>
    <property type="match status" value="1"/>
</dbReference>
<dbReference type="Gene3D" id="1.10.238.260">
    <property type="match status" value="1"/>
</dbReference>
<dbReference type="Gene3D" id="3.30.160.270">
    <property type="match status" value="1"/>
</dbReference>
<dbReference type="Gene3D" id="3.20.20.70">
    <property type="entry name" value="Aldolase class I"/>
    <property type="match status" value="1"/>
</dbReference>
<dbReference type="HAMAP" id="MF_01025">
    <property type="entry name" value="LeuA_type1"/>
    <property type="match status" value="1"/>
</dbReference>
<dbReference type="InterPro" id="IPR050073">
    <property type="entry name" value="2-IPM_HCS-like"/>
</dbReference>
<dbReference type="InterPro" id="IPR013709">
    <property type="entry name" value="2-isopropylmalate_synth_dimer"/>
</dbReference>
<dbReference type="InterPro" id="IPR002034">
    <property type="entry name" value="AIPM/Hcit_synth_CS"/>
</dbReference>
<dbReference type="InterPro" id="IPR013785">
    <property type="entry name" value="Aldolase_TIM"/>
</dbReference>
<dbReference type="InterPro" id="IPR054691">
    <property type="entry name" value="LeuA/HCS_post-cat"/>
</dbReference>
<dbReference type="InterPro" id="IPR036230">
    <property type="entry name" value="LeuA_allosteric_dom_sf"/>
</dbReference>
<dbReference type="InterPro" id="IPR005671">
    <property type="entry name" value="LeuA_bact_synth"/>
</dbReference>
<dbReference type="InterPro" id="IPR000891">
    <property type="entry name" value="PYR_CT"/>
</dbReference>
<dbReference type="NCBIfam" id="TIGR00973">
    <property type="entry name" value="leuA_bact"/>
    <property type="match status" value="1"/>
</dbReference>
<dbReference type="NCBIfam" id="NF002086">
    <property type="entry name" value="PRK00915.1-3"/>
    <property type="match status" value="1"/>
</dbReference>
<dbReference type="NCBIfam" id="NF002087">
    <property type="entry name" value="PRK00915.1-4"/>
    <property type="match status" value="1"/>
</dbReference>
<dbReference type="PANTHER" id="PTHR10277:SF9">
    <property type="entry name" value="2-ISOPROPYLMALATE SYNTHASE 1, CHLOROPLASTIC-RELATED"/>
    <property type="match status" value="1"/>
</dbReference>
<dbReference type="PANTHER" id="PTHR10277">
    <property type="entry name" value="HOMOCITRATE SYNTHASE-RELATED"/>
    <property type="match status" value="1"/>
</dbReference>
<dbReference type="Pfam" id="PF22617">
    <property type="entry name" value="HCS_D2"/>
    <property type="match status" value="1"/>
</dbReference>
<dbReference type="Pfam" id="PF00682">
    <property type="entry name" value="HMGL-like"/>
    <property type="match status" value="1"/>
</dbReference>
<dbReference type="Pfam" id="PF08502">
    <property type="entry name" value="LeuA_dimer"/>
    <property type="match status" value="1"/>
</dbReference>
<dbReference type="SMART" id="SM00917">
    <property type="entry name" value="LeuA_dimer"/>
    <property type="match status" value="1"/>
</dbReference>
<dbReference type="SUPFAM" id="SSF110921">
    <property type="entry name" value="2-isopropylmalate synthase LeuA, allosteric (dimerisation) domain"/>
    <property type="match status" value="1"/>
</dbReference>
<dbReference type="SUPFAM" id="SSF51569">
    <property type="entry name" value="Aldolase"/>
    <property type="match status" value="1"/>
</dbReference>
<dbReference type="PROSITE" id="PS00815">
    <property type="entry name" value="AIPM_HOMOCIT_SYNTH_1"/>
    <property type="match status" value="1"/>
</dbReference>
<dbReference type="PROSITE" id="PS00816">
    <property type="entry name" value="AIPM_HOMOCIT_SYNTH_2"/>
    <property type="match status" value="1"/>
</dbReference>
<dbReference type="PROSITE" id="PS50991">
    <property type="entry name" value="PYR_CT"/>
    <property type="match status" value="1"/>
</dbReference>